<sequence>MKVRSSVKKRCEHCQVIKRHGRVLIICKANPKHNQKQG</sequence>
<protein>
    <recommendedName>
        <fullName evidence="1">Large ribosomal subunit protein bL36</fullName>
    </recommendedName>
    <alternativeName>
        <fullName evidence="2">50S ribosomal protein L36</fullName>
    </alternativeName>
</protein>
<accession>A8F4T5</accession>
<organism>
    <name type="scientific">Pseudothermotoga lettingae (strain ATCC BAA-301 / DSM 14385 / NBRC 107922 / TMO)</name>
    <name type="common">Thermotoga lettingae</name>
    <dbReference type="NCBI Taxonomy" id="416591"/>
    <lineage>
        <taxon>Bacteria</taxon>
        <taxon>Thermotogati</taxon>
        <taxon>Thermotogota</taxon>
        <taxon>Thermotogae</taxon>
        <taxon>Thermotogales</taxon>
        <taxon>Thermotogaceae</taxon>
        <taxon>Pseudothermotoga</taxon>
    </lineage>
</organism>
<name>RL36_PSELT</name>
<proteinExistence type="inferred from homology"/>
<reference key="1">
    <citation type="submission" date="2007-08" db="EMBL/GenBank/DDBJ databases">
        <title>Complete sequence of Thermotoga lettingae TMO.</title>
        <authorList>
            <consortium name="US DOE Joint Genome Institute"/>
            <person name="Copeland A."/>
            <person name="Lucas S."/>
            <person name="Lapidus A."/>
            <person name="Barry K."/>
            <person name="Glavina del Rio T."/>
            <person name="Dalin E."/>
            <person name="Tice H."/>
            <person name="Pitluck S."/>
            <person name="Foster B."/>
            <person name="Bruce D."/>
            <person name="Schmutz J."/>
            <person name="Larimer F."/>
            <person name="Land M."/>
            <person name="Hauser L."/>
            <person name="Kyrpides N."/>
            <person name="Mikhailova N."/>
            <person name="Nelson K."/>
            <person name="Gogarten J.P."/>
            <person name="Noll K."/>
            <person name="Richardson P."/>
        </authorList>
    </citation>
    <scope>NUCLEOTIDE SEQUENCE [LARGE SCALE GENOMIC DNA]</scope>
    <source>
        <strain>ATCC BAA-301 / DSM 14385 / NBRC 107922 / TMO</strain>
    </source>
</reference>
<feature type="chain" id="PRO_1000059037" description="Large ribosomal subunit protein bL36">
    <location>
        <begin position="1"/>
        <end position="38"/>
    </location>
</feature>
<evidence type="ECO:0000255" key="1">
    <source>
        <dbReference type="HAMAP-Rule" id="MF_00251"/>
    </source>
</evidence>
<evidence type="ECO:0000305" key="2"/>
<keyword id="KW-1185">Reference proteome</keyword>
<keyword id="KW-0687">Ribonucleoprotein</keyword>
<keyword id="KW-0689">Ribosomal protein</keyword>
<dbReference type="EMBL" id="CP000812">
    <property type="protein sequence ID" value="ABV33169.1"/>
    <property type="molecule type" value="Genomic_DNA"/>
</dbReference>
<dbReference type="SMR" id="A8F4T5"/>
<dbReference type="STRING" id="416591.Tlet_0603"/>
<dbReference type="KEGG" id="tle:Tlet_0603"/>
<dbReference type="eggNOG" id="COG0257">
    <property type="taxonomic scope" value="Bacteria"/>
</dbReference>
<dbReference type="HOGENOM" id="CLU_135723_3_3_0"/>
<dbReference type="OrthoDB" id="9802520at2"/>
<dbReference type="Proteomes" id="UP000002016">
    <property type="component" value="Chromosome"/>
</dbReference>
<dbReference type="GO" id="GO:0005737">
    <property type="term" value="C:cytoplasm"/>
    <property type="evidence" value="ECO:0007669"/>
    <property type="project" value="UniProtKB-ARBA"/>
</dbReference>
<dbReference type="GO" id="GO:1990904">
    <property type="term" value="C:ribonucleoprotein complex"/>
    <property type="evidence" value="ECO:0007669"/>
    <property type="project" value="UniProtKB-KW"/>
</dbReference>
<dbReference type="GO" id="GO:0005840">
    <property type="term" value="C:ribosome"/>
    <property type="evidence" value="ECO:0007669"/>
    <property type="project" value="UniProtKB-KW"/>
</dbReference>
<dbReference type="GO" id="GO:0003735">
    <property type="term" value="F:structural constituent of ribosome"/>
    <property type="evidence" value="ECO:0007669"/>
    <property type="project" value="InterPro"/>
</dbReference>
<dbReference type="GO" id="GO:0006412">
    <property type="term" value="P:translation"/>
    <property type="evidence" value="ECO:0007669"/>
    <property type="project" value="UniProtKB-UniRule"/>
</dbReference>
<dbReference type="HAMAP" id="MF_00251">
    <property type="entry name" value="Ribosomal_bL36"/>
    <property type="match status" value="1"/>
</dbReference>
<dbReference type="InterPro" id="IPR000473">
    <property type="entry name" value="Ribosomal_bL36"/>
</dbReference>
<dbReference type="InterPro" id="IPR035977">
    <property type="entry name" value="Ribosomal_bL36_sp"/>
</dbReference>
<dbReference type="NCBIfam" id="TIGR01022">
    <property type="entry name" value="rpmJ_bact"/>
    <property type="match status" value="1"/>
</dbReference>
<dbReference type="PANTHER" id="PTHR42888">
    <property type="entry name" value="50S RIBOSOMAL PROTEIN L36, CHLOROPLASTIC"/>
    <property type="match status" value="1"/>
</dbReference>
<dbReference type="PANTHER" id="PTHR42888:SF1">
    <property type="entry name" value="LARGE RIBOSOMAL SUBUNIT PROTEIN BL36C"/>
    <property type="match status" value="1"/>
</dbReference>
<dbReference type="Pfam" id="PF00444">
    <property type="entry name" value="Ribosomal_L36"/>
    <property type="match status" value="1"/>
</dbReference>
<dbReference type="SUPFAM" id="SSF57840">
    <property type="entry name" value="Ribosomal protein L36"/>
    <property type="match status" value="1"/>
</dbReference>
<dbReference type="PROSITE" id="PS00828">
    <property type="entry name" value="RIBOSOMAL_L36"/>
    <property type="match status" value="1"/>
</dbReference>
<gene>
    <name evidence="1" type="primary">rpmJ</name>
    <name type="ordered locus">Tlet_0603</name>
</gene>
<comment type="similarity">
    <text evidence="1">Belongs to the bacterial ribosomal protein bL36 family.</text>
</comment>